<sequence>MSKPTDQLYYANGVDSYIAETHAWRTPETCSTYMLKYVKKTDRILDVGCGPGTITVGFPKYVPEGEVIGVEPSQELLDKAEEALRKEETLKKEKINNCSFRLGSIYKLPFPDNTFDIVNTHQVLVHLQDPVAALVELKRVTKPGGYVCCKEADLLSACVYPKEYEHDLLLQSQARINLHGTNPTAGRSLRGWAIDAKYVAENIHSSASTWCFADEETRKWVSRLFIQRVLHSNERLDDDDAKDQSLRKRVAEAWQRWKEDSRGCFFMTDGQIVYKKEE</sequence>
<protein>
    <recommendedName>
        <fullName>Uncharacterized methyltransferase C1B3.06c</fullName>
        <ecNumber>2.1.1.-</ecNumber>
    </recommendedName>
</protein>
<organism>
    <name type="scientific">Schizosaccharomyces pombe (strain 972 / ATCC 24843)</name>
    <name type="common">Fission yeast</name>
    <dbReference type="NCBI Taxonomy" id="284812"/>
    <lineage>
        <taxon>Eukaryota</taxon>
        <taxon>Fungi</taxon>
        <taxon>Dikarya</taxon>
        <taxon>Ascomycota</taxon>
        <taxon>Taphrinomycotina</taxon>
        <taxon>Schizosaccharomycetes</taxon>
        <taxon>Schizosaccharomycetales</taxon>
        <taxon>Schizosaccharomycetaceae</taxon>
        <taxon>Schizosaccharomyces</taxon>
    </lineage>
</organism>
<gene>
    <name type="ORF">SPAC1B3.06c</name>
</gene>
<keyword id="KW-0963">Cytoplasm</keyword>
<keyword id="KW-0489">Methyltransferase</keyword>
<keyword id="KW-0539">Nucleus</keyword>
<keyword id="KW-1185">Reference proteome</keyword>
<keyword id="KW-0808">Transferase</keyword>
<reference key="1">
    <citation type="journal article" date="2002" name="Nature">
        <title>The genome sequence of Schizosaccharomyces pombe.</title>
        <authorList>
            <person name="Wood V."/>
            <person name="Gwilliam R."/>
            <person name="Rajandream M.A."/>
            <person name="Lyne M.H."/>
            <person name="Lyne R."/>
            <person name="Stewart A."/>
            <person name="Sgouros J.G."/>
            <person name="Peat N."/>
            <person name="Hayles J."/>
            <person name="Baker S.G."/>
            <person name="Basham D."/>
            <person name="Bowman S."/>
            <person name="Brooks K."/>
            <person name="Brown D."/>
            <person name="Brown S."/>
            <person name="Chillingworth T."/>
            <person name="Churcher C.M."/>
            <person name="Collins M."/>
            <person name="Connor R."/>
            <person name="Cronin A."/>
            <person name="Davis P."/>
            <person name="Feltwell T."/>
            <person name="Fraser A."/>
            <person name="Gentles S."/>
            <person name="Goble A."/>
            <person name="Hamlin N."/>
            <person name="Harris D.E."/>
            <person name="Hidalgo J."/>
            <person name="Hodgson G."/>
            <person name="Holroyd S."/>
            <person name="Hornsby T."/>
            <person name="Howarth S."/>
            <person name="Huckle E.J."/>
            <person name="Hunt S."/>
            <person name="Jagels K."/>
            <person name="James K.D."/>
            <person name="Jones L."/>
            <person name="Jones M."/>
            <person name="Leather S."/>
            <person name="McDonald S."/>
            <person name="McLean J."/>
            <person name="Mooney P."/>
            <person name="Moule S."/>
            <person name="Mungall K.L."/>
            <person name="Murphy L.D."/>
            <person name="Niblett D."/>
            <person name="Odell C."/>
            <person name="Oliver K."/>
            <person name="O'Neil S."/>
            <person name="Pearson D."/>
            <person name="Quail M.A."/>
            <person name="Rabbinowitsch E."/>
            <person name="Rutherford K.M."/>
            <person name="Rutter S."/>
            <person name="Saunders D."/>
            <person name="Seeger K."/>
            <person name="Sharp S."/>
            <person name="Skelton J."/>
            <person name="Simmonds M.N."/>
            <person name="Squares R."/>
            <person name="Squares S."/>
            <person name="Stevens K."/>
            <person name="Taylor K."/>
            <person name="Taylor R.G."/>
            <person name="Tivey A."/>
            <person name="Walsh S.V."/>
            <person name="Warren T."/>
            <person name="Whitehead S."/>
            <person name="Woodward J.R."/>
            <person name="Volckaert G."/>
            <person name="Aert R."/>
            <person name="Robben J."/>
            <person name="Grymonprez B."/>
            <person name="Weltjens I."/>
            <person name="Vanstreels E."/>
            <person name="Rieger M."/>
            <person name="Schaefer M."/>
            <person name="Mueller-Auer S."/>
            <person name="Gabel C."/>
            <person name="Fuchs M."/>
            <person name="Duesterhoeft A."/>
            <person name="Fritzc C."/>
            <person name="Holzer E."/>
            <person name="Moestl D."/>
            <person name="Hilbert H."/>
            <person name="Borzym K."/>
            <person name="Langer I."/>
            <person name="Beck A."/>
            <person name="Lehrach H."/>
            <person name="Reinhardt R."/>
            <person name="Pohl T.M."/>
            <person name="Eger P."/>
            <person name="Zimmermann W."/>
            <person name="Wedler H."/>
            <person name="Wambutt R."/>
            <person name="Purnelle B."/>
            <person name="Goffeau A."/>
            <person name="Cadieu E."/>
            <person name="Dreano S."/>
            <person name="Gloux S."/>
            <person name="Lelaure V."/>
            <person name="Mottier S."/>
            <person name="Galibert F."/>
            <person name="Aves S.J."/>
            <person name="Xiang Z."/>
            <person name="Hunt C."/>
            <person name="Moore K."/>
            <person name="Hurst S.M."/>
            <person name="Lucas M."/>
            <person name="Rochet M."/>
            <person name="Gaillardin C."/>
            <person name="Tallada V.A."/>
            <person name="Garzon A."/>
            <person name="Thode G."/>
            <person name="Daga R.R."/>
            <person name="Cruzado L."/>
            <person name="Jimenez J."/>
            <person name="Sanchez M."/>
            <person name="del Rey F."/>
            <person name="Benito J."/>
            <person name="Dominguez A."/>
            <person name="Revuelta J.L."/>
            <person name="Moreno S."/>
            <person name="Armstrong J."/>
            <person name="Forsburg S.L."/>
            <person name="Cerutti L."/>
            <person name="Lowe T."/>
            <person name="McCombie W.R."/>
            <person name="Paulsen I."/>
            <person name="Potashkin J."/>
            <person name="Shpakovski G.V."/>
            <person name="Ussery D."/>
            <person name="Barrell B.G."/>
            <person name="Nurse P."/>
        </authorList>
    </citation>
    <scope>NUCLEOTIDE SEQUENCE [LARGE SCALE GENOMIC DNA]</scope>
    <source>
        <strain>972 / ATCC 24843</strain>
    </source>
</reference>
<reference key="2">
    <citation type="journal article" date="2006" name="Nat. Biotechnol.">
        <title>ORFeome cloning and global analysis of protein localization in the fission yeast Schizosaccharomyces pombe.</title>
        <authorList>
            <person name="Matsuyama A."/>
            <person name="Arai R."/>
            <person name="Yashiroda Y."/>
            <person name="Shirai A."/>
            <person name="Kamata A."/>
            <person name="Sekido S."/>
            <person name="Kobayashi Y."/>
            <person name="Hashimoto A."/>
            <person name="Hamamoto M."/>
            <person name="Hiraoka Y."/>
            <person name="Horinouchi S."/>
            <person name="Yoshida M."/>
        </authorList>
    </citation>
    <scope>SUBCELLULAR LOCATION [LARGE SCALE ANALYSIS]</scope>
</reference>
<feature type="chain" id="PRO_0000339158" description="Uncharacterized methyltransferase C1B3.06c">
    <location>
        <begin position="1"/>
        <end position="278"/>
    </location>
</feature>
<evidence type="ECO:0000250" key="1"/>
<evidence type="ECO:0000269" key="2">
    <source>
    </source>
</evidence>
<comment type="function">
    <text evidence="1">Probable methyltransferase.</text>
</comment>
<comment type="subcellular location">
    <subcellularLocation>
        <location evidence="2">Cytoplasm</location>
    </subcellularLocation>
    <subcellularLocation>
        <location evidence="2">Nucleus</location>
    </subcellularLocation>
</comment>
<accession>O13871</accession>
<proteinExistence type="inferred from homology"/>
<name>YE16_SCHPO</name>
<dbReference type="EC" id="2.1.1.-"/>
<dbReference type="EMBL" id="CU329670">
    <property type="protein sequence ID" value="CAB11235.1"/>
    <property type="molecule type" value="Genomic_DNA"/>
</dbReference>
<dbReference type="PIR" id="T38024">
    <property type="entry name" value="T38024"/>
</dbReference>
<dbReference type="RefSeq" id="NP_594790.1">
    <property type="nucleotide sequence ID" value="NM_001020218.2"/>
</dbReference>
<dbReference type="BioGRID" id="278703">
    <property type="interactions" value="4"/>
</dbReference>
<dbReference type="FunCoup" id="O13871">
    <property type="interactions" value="2"/>
</dbReference>
<dbReference type="STRING" id="284812.O13871"/>
<dbReference type="PaxDb" id="4896-SPAC1B3.06c.1"/>
<dbReference type="EnsemblFungi" id="SPAC1B3.06c.1">
    <property type="protein sequence ID" value="SPAC1B3.06c.1:pep"/>
    <property type="gene ID" value="SPAC1B3.06c"/>
</dbReference>
<dbReference type="KEGG" id="spo:2542230"/>
<dbReference type="PomBase" id="SPAC1B3.06c"/>
<dbReference type="VEuPathDB" id="FungiDB:SPAC1B3.06c"/>
<dbReference type="eggNOG" id="KOG1269">
    <property type="taxonomic scope" value="Eukaryota"/>
</dbReference>
<dbReference type="HOGENOM" id="CLU_057148_2_0_1"/>
<dbReference type="InParanoid" id="O13871"/>
<dbReference type="OMA" id="MIHVWAR"/>
<dbReference type="PhylomeDB" id="O13871"/>
<dbReference type="PRO" id="PR:O13871"/>
<dbReference type="Proteomes" id="UP000002485">
    <property type="component" value="Chromosome I"/>
</dbReference>
<dbReference type="GO" id="GO:0005829">
    <property type="term" value="C:cytosol"/>
    <property type="evidence" value="ECO:0007005"/>
    <property type="project" value="PomBase"/>
</dbReference>
<dbReference type="GO" id="GO:0005634">
    <property type="term" value="C:nucleus"/>
    <property type="evidence" value="ECO:0007005"/>
    <property type="project" value="PomBase"/>
</dbReference>
<dbReference type="GO" id="GO:0008168">
    <property type="term" value="F:methyltransferase activity"/>
    <property type="evidence" value="ECO:0000318"/>
    <property type="project" value="GO_Central"/>
</dbReference>
<dbReference type="GO" id="GO:0008757">
    <property type="term" value="F:S-adenosylmethionine-dependent methyltransferase activity"/>
    <property type="evidence" value="ECO:0007669"/>
    <property type="project" value="InterPro"/>
</dbReference>
<dbReference type="GO" id="GO:0032259">
    <property type="term" value="P:methylation"/>
    <property type="evidence" value="ECO:0007669"/>
    <property type="project" value="UniProtKB-KW"/>
</dbReference>
<dbReference type="CDD" id="cd02440">
    <property type="entry name" value="AdoMet_MTases"/>
    <property type="match status" value="1"/>
</dbReference>
<dbReference type="Gene3D" id="3.40.50.150">
    <property type="entry name" value="Vaccinia Virus protein VP39"/>
    <property type="match status" value="1"/>
</dbReference>
<dbReference type="InterPro" id="IPR013216">
    <property type="entry name" value="Methyltransf_11"/>
</dbReference>
<dbReference type="InterPro" id="IPR029063">
    <property type="entry name" value="SAM-dependent_MTases_sf"/>
</dbReference>
<dbReference type="PANTHER" id="PTHR43591:SF24">
    <property type="entry name" value="2-METHOXY-6-POLYPRENYL-1,4-BENZOQUINOL METHYLASE, MITOCHONDRIAL"/>
    <property type="match status" value="1"/>
</dbReference>
<dbReference type="PANTHER" id="PTHR43591">
    <property type="entry name" value="METHYLTRANSFERASE"/>
    <property type="match status" value="1"/>
</dbReference>
<dbReference type="Pfam" id="PF08241">
    <property type="entry name" value="Methyltransf_11"/>
    <property type="match status" value="1"/>
</dbReference>
<dbReference type="SUPFAM" id="SSF53335">
    <property type="entry name" value="S-adenosyl-L-methionine-dependent methyltransferases"/>
    <property type="match status" value="1"/>
</dbReference>